<comment type="function">
    <text evidence="2">GTP hydrolase that promotes the GTP-dependent binding of aminoacyl-tRNA to the A-site of ribosomes during protein biosynthesis.</text>
</comment>
<comment type="catalytic activity">
    <reaction evidence="2">
        <text>GTP + H2O = GDP + phosphate + H(+)</text>
        <dbReference type="Rhea" id="RHEA:19669"/>
        <dbReference type="ChEBI" id="CHEBI:15377"/>
        <dbReference type="ChEBI" id="CHEBI:15378"/>
        <dbReference type="ChEBI" id="CHEBI:37565"/>
        <dbReference type="ChEBI" id="CHEBI:43474"/>
        <dbReference type="ChEBI" id="CHEBI:58189"/>
        <dbReference type="EC" id="3.6.5.3"/>
    </reaction>
    <physiologicalReaction direction="left-to-right" evidence="2">
        <dbReference type="Rhea" id="RHEA:19670"/>
    </physiologicalReaction>
</comment>
<comment type="subunit">
    <text evidence="2">Monomer.</text>
</comment>
<comment type="subcellular location">
    <subcellularLocation>
        <location evidence="2">Cytoplasm</location>
    </subcellularLocation>
</comment>
<comment type="similarity">
    <text evidence="2">Belongs to the TRAFAC class translation factor GTPase superfamily. Classic translation factor GTPase family. EF-Tu/EF-1A subfamily.</text>
</comment>
<feature type="chain" id="PRO_1000095082" description="Elongation factor Tu">
    <location>
        <begin position="1"/>
        <end position="409"/>
    </location>
</feature>
<feature type="domain" description="tr-type G">
    <location>
        <begin position="10"/>
        <end position="214"/>
    </location>
</feature>
<feature type="region of interest" description="G1" evidence="1">
    <location>
        <begin position="19"/>
        <end position="26"/>
    </location>
</feature>
<feature type="region of interest" description="G2" evidence="1">
    <location>
        <begin position="60"/>
        <end position="64"/>
    </location>
</feature>
<feature type="region of interest" description="G3" evidence="1">
    <location>
        <begin position="81"/>
        <end position="84"/>
    </location>
</feature>
<feature type="region of interest" description="G4" evidence="1">
    <location>
        <begin position="136"/>
        <end position="139"/>
    </location>
</feature>
<feature type="region of interest" description="G5" evidence="1">
    <location>
        <begin position="174"/>
        <end position="176"/>
    </location>
</feature>
<feature type="binding site" evidence="2">
    <location>
        <begin position="19"/>
        <end position="26"/>
    </location>
    <ligand>
        <name>GTP</name>
        <dbReference type="ChEBI" id="CHEBI:37565"/>
    </ligand>
</feature>
<feature type="binding site" evidence="2">
    <location>
        <position position="26"/>
    </location>
    <ligand>
        <name>Mg(2+)</name>
        <dbReference type="ChEBI" id="CHEBI:18420"/>
    </ligand>
</feature>
<feature type="binding site" evidence="2">
    <location>
        <begin position="81"/>
        <end position="85"/>
    </location>
    <ligand>
        <name>GTP</name>
        <dbReference type="ChEBI" id="CHEBI:37565"/>
    </ligand>
</feature>
<feature type="binding site" evidence="2">
    <location>
        <begin position="136"/>
        <end position="139"/>
    </location>
    <ligand>
        <name>GTP</name>
        <dbReference type="ChEBI" id="CHEBI:37565"/>
    </ligand>
</feature>
<evidence type="ECO:0000250" key="1"/>
<evidence type="ECO:0000255" key="2">
    <source>
        <dbReference type="HAMAP-Rule" id="MF_00118"/>
    </source>
</evidence>
<protein>
    <recommendedName>
        <fullName evidence="2">Elongation factor Tu</fullName>
        <shortName evidence="2">EF-Tu</shortName>
        <ecNumber evidence="2">3.6.5.3</ecNumber>
    </recommendedName>
</protein>
<sequence>MARAKFERNKPHLNIGTIGHVDHGKTTLTAAITMTLAALGQATAKGYDQIDNAPEEKARGITINTAHVEYETENRHYAHVDCPGHADYVKNMITGAAQMDGGILVVAATDGPMPQTREHILLAKQVGVPSLVVFLNKEDLMDDPELLELVELELRELLSSYDFPGDDIPIIKGSGLQALEAMTKNPKTKKGENPWVDKIYELMDAVDSFIPTPERDVDKPFLMAVEDVFTITGRGTVATGRIERGKVKVGDTVELIGLKDTRTTAVTGIEMFKKSLEEGLAGDNAGVLLRGLKKEDIERGMVIAKPGSITPHTQFEGEVYVLTEKEGGRKTPFFAGYRPQFYVRTTDVTGTIKAYTSDEGKEVEMVMPGDRIKMTVELINAIAIEQGMRFAIREGGRTIGAGVVSKIIK</sequence>
<keyword id="KW-0963">Cytoplasm</keyword>
<keyword id="KW-0251">Elongation factor</keyword>
<keyword id="KW-0342">GTP-binding</keyword>
<keyword id="KW-0378">Hydrolase</keyword>
<keyword id="KW-0460">Magnesium</keyword>
<keyword id="KW-0479">Metal-binding</keyword>
<keyword id="KW-0547">Nucleotide-binding</keyword>
<keyword id="KW-0648">Protein biosynthesis</keyword>
<keyword id="KW-1185">Reference proteome</keyword>
<accession>B2J5B1</accession>
<proteinExistence type="inferred from homology"/>
<reference key="1">
    <citation type="journal article" date="2013" name="Plant Physiol.">
        <title>A Nostoc punctiforme Sugar Transporter Necessary to Establish a Cyanobacterium-Plant Symbiosis.</title>
        <authorList>
            <person name="Ekman M."/>
            <person name="Picossi S."/>
            <person name="Campbell E.L."/>
            <person name="Meeks J.C."/>
            <person name="Flores E."/>
        </authorList>
    </citation>
    <scope>NUCLEOTIDE SEQUENCE [LARGE SCALE GENOMIC DNA]</scope>
    <source>
        <strain>ATCC 29133 / PCC 73102</strain>
    </source>
</reference>
<dbReference type="EC" id="3.6.5.3" evidence="2"/>
<dbReference type="EMBL" id="CP001037">
    <property type="protein sequence ID" value="ACC82268.1"/>
    <property type="molecule type" value="Genomic_DNA"/>
</dbReference>
<dbReference type="RefSeq" id="WP_012410239.1">
    <property type="nucleotide sequence ID" value="NC_010628.1"/>
</dbReference>
<dbReference type="SMR" id="B2J5B1"/>
<dbReference type="STRING" id="63737.Npun_F3884"/>
<dbReference type="EnsemblBacteria" id="ACC82268">
    <property type="protein sequence ID" value="ACC82268"/>
    <property type="gene ID" value="Npun_F3884"/>
</dbReference>
<dbReference type="KEGG" id="npu:Npun_F3884"/>
<dbReference type="eggNOG" id="COG0050">
    <property type="taxonomic scope" value="Bacteria"/>
</dbReference>
<dbReference type="HOGENOM" id="CLU_007265_0_1_3"/>
<dbReference type="OrthoDB" id="9804504at2"/>
<dbReference type="PhylomeDB" id="B2J5B1"/>
<dbReference type="Proteomes" id="UP000001191">
    <property type="component" value="Chromosome"/>
</dbReference>
<dbReference type="GO" id="GO:0005829">
    <property type="term" value="C:cytosol"/>
    <property type="evidence" value="ECO:0007669"/>
    <property type="project" value="TreeGrafter"/>
</dbReference>
<dbReference type="GO" id="GO:0005525">
    <property type="term" value="F:GTP binding"/>
    <property type="evidence" value="ECO:0007669"/>
    <property type="project" value="UniProtKB-UniRule"/>
</dbReference>
<dbReference type="GO" id="GO:0003924">
    <property type="term" value="F:GTPase activity"/>
    <property type="evidence" value="ECO:0007669"/>
    <property type="project" value="InterPro"/>
</dbReference>
<dbReference type="GO" id="GO:0003746">
    <property type="term" value="F:translation elongation factor activity"/>
    <property type="evidence" value="ECO:0007669"/>
    <property type="project" value="UniProtKB-UniRule"/>
</dbReference>
<dbReference type="CDD" id="cd01884">
    <property type="entry name" value="EF_Tu"/>
    <property type="match status" value="1"/>
</dbReference>
<dbReference type="CDD" id="cd03697">
    <property type="entry name" value="EFTU_II"/>
    <property type="match status" value="1"/>
</dbReference>
<dbReference type="CDD" id="cd03707">
    <property type="entry name" value="EFTU_III"/>
    <property type="match status" value="1"/>
</dbReference>
<dbReference type="FunFam" id="2.40.30.10:FF:000001">
    <property type="entry name" value="Elongation factor Tu"/>
    <property type="match status" value="1"/>
</dbReference>
<dbReference type="FunFam" id="2.40.30.10:FF:000046">
    <property type="entry name" value="Elongation factor Tu"/>
    <property type="match status" value="1"/>
</dbReference>
<dbReference type="FunFam" id="3.40.50.300:FF:000003">
    <property type="entry name" value="Elongation factor Tu"/>
    <property type="match status" value="1"/>
</dbReference>
<dbReference type="Gene3D" id="3.40.50.300">
    <property type="entry name" value="P-loop containing nucleotide triphosphate hydrolases"/>
    <property type="match status" value="1"/>
</dbReference>
<dbReference type="Gene3D" id="2.40.30.10">
    <property type="entry name" value="Translation factors"/>
    <property type="match status" value="2"/>
</dbReference>
<dbReference type="HAMAP" id="MF_00118_B">
    <property type="entry name" value="EF_Tu_B"/>
    <property type="match status" value="1"/>
</dbReference>
<dbReference type="InterPro" id="IPR041709">
    <property type="entry name" value="EF-Tu_GTP-bd"/>
</dbReference>
<dbReference type="InterPro" id="IPR050055">
    <property type="entry name" value="EF-Tu_GTPase"/>
</dbReference>
<dbReference type="InterPro" id="IPR004161">
    <property type="entry name" value="EFTu-like_2"/>
</dbReference>
<dbReference type="InterPro" id="IPR033720">
    <property type="entry name" value="EFTU_2"/>
</dbReference>
<dbReference type="InterPro" id="IPR031157">
    <property type="entry name" value="G_TR_CS"/>
</dbReference>
<dbReference type="InterPro" id="IPR027417">
    <property type="entry name" value="P-loop_NTPase"/>
</dbReference>
<dbReference type="InterPro" id="IPR005225">
    <property type="entry name" value="Small_GTP-bd"/>
</dbReference>
<dbReference type="InterPro" id="IPR000795">
    <property type="entry name" value="T_Tr_GTP-bd_dom"/>
</dbReference>
<dbReference type="InterPro" id="IPR009000">
    <property type="entry name" value="Transl_B-barrel_sf"/>
</dbReference>
<dbReference type="InterPro" id="IPR009001">
    <property type="entry name" value="Transl_elong_EF1A/Init_IF2_C"/>
</dbReference>
<dbReference type="InterPro" id="IPR004541">
    <property type="entry name" value="Transl_elong_EFTu/EF1A_bac/org"/>
</dbReference>
<dbReference type="InterPro" id="IPR004160">
    <property type="entry name" value="Transl_elong_EFTu/EF1A_C"/>
</dbReference>
<dbReference type="NCBIfam" id="TIGR00485">
    <property type="entry name" value="EF-Tu"/>
    <property type="match status" value="1"/>
</dbReference>
<dbReference type="NCBIfam" id="NF000766">
    <property type="entry name" value="PRK00049.1"/>
    <property type="match status" value="1"/>
</dbReference>
<dbReference type="NCBIfam" id="NF009372">
    <property type="entry name" value="PRK12735.1"/>
    <property type="match status" value="1"/>
</dbReference>
<dbReference type="NCBIfam" id="NF009373">
    <property type="entry name" value="PRK12736.1"/>
    <property type="match status" value="1"/>
</dbReference>
<dbReference type="NCBIfam" id="TIGR00231">
    <property type="entry name" value="small_GTP"/>
    <property type="match status" value="1"/>
</dbReference>
<dbReference type="PANTHER" id="PTHR43721:SF22">
    <property type="entry name" value="ELONGATION FACTOR TU, MITOCHONDRIAL"/>
    <property type="match status" value="1"/>
</dbReference>
<dbReference type="PANTHER" id="PTHR43721">
    <property type="entry name" value="ELONGATION FACTOR TU-RELATED"/>
    <property type="match status" value="1"/>
</dbReference>
<dbReference type="Pfam" id="PF00009">
    <property type="entry name" value="GTP_EFTU"/>
    <property type="match status" value="1"/>
</dbReference>
<dbReference type="Pfam" id="PF03144">
    <property type="entry name" value="GTP_EFTU_D2"/>
    <property type="match status" value="1"/>
</dbReference>
<dbReference type="Pfam" id="PF03143">
    <property type="entry name" value="GTP_EFTU_D3"/>
    <property type="match status" value="1"/>
</dbReference>
<dbReference type="PRINTS" id="PR00315">
    <property type="entry name" value="ELONGATNFCT"/>
</dbReference>
<dbReference type="SUPFAM" id="SSF50465">
    <property type="entry name" value="EF-Tu/eEF-1alpha/eIF2-gamma C-terminal domain"/>
    <property type="match status" value="1"/>
</dbReference>
<dbReference type="SUPFAM" id="SSF52540">
    <property type="entry name" value="P-loop containing nucleoside triphosphate hydrolases"/>
    <property type="match status" value="1"/>
</dbReference>
<dbReference type="SUPFAM" id="SSF50447">
    <property type="entry name" value="Translation proteins"/>
    <property type="match status" value="1"/>
</dbReference>
<dbReference type="PROSITE" id="PS00301">
    <property type="entry name" value="G_TR_1"/>
    <property type="match status" value="1"/>
</dbReference>
<dbReference type="PROSITE" id="PS51722">
    <property type="entry name" value="G_TR_2"/>
    <property type="match status" value="1"/>
</dbReference>
<organism>
    <name type="scientific">Nostoc punctiforme (strain ATCC 29133 / PCC 73102)</name>
    <dbReference type="NCBI Taxonomy" id="63737"/>
    <lineage>
        <taxon>Bacteria</taxon>
        <taxon>Bacillati</taxon>
        <taxon>Cyanobacteriota</taxon>
        <taxon>Cyanophyceae</taxon>
        <taxon>Nostocales</taxon>
        <taxon>Nostocaceae</taxon>
        <taxon>Nostoc</taxon>
    </lineage>
</organism>
<gene>
    <name evidence="2" type="primary">tuf</name>
    <name type="ordered locus">Npun_F3884</name>
</gene>
<name>EFTU_NOSP7</name>